<gene>
    <name evidence="3" type="primary">glnA</name>
    <name type="ordered locus">alr2328</name>
</gene>
<organism>
    <name type="scientific">Nostoc sp. (strain PCC 7120 / SAG 25.82 / UTEX 2576)</name>
    <dbReference type="NCBI Taxonomy" id="103690"/>
    <lineage>
        <taxon>Bacteria</taxon>
        <taxon>Bacillati</taxon>
        <taxon>Cyanobacteriota</taxon>
        <taxon>Cyanophyceae</taxon>
        <taxon>Nostocales</taxon>
        <taxon>Nostocaceae</taxon>
        <taxon>Nostoc</taxon>
    </lineage>
</organism>
<evidence type="ECO:0000250" key="1">
    <source>
        <dbReference type="UniProtKB" id="P0A1P6"/>
    </source>
</evidence>
<evidence type="ECO:0000250" key="2">
    <source>
        <dbReference type="UniProtKB" id="P12425"/>
    </source>
</evidence>
<evidence type="ECO:0000250" key="3">
    <source>
        <dbReference type="UniProtKB" id="P77961"/>
    </source>
</evidence>
<evidence type="ECO:0000250" key="4">
    <source>
        <dbReference type="UniProtKB" id="P9WN39"/>
    </source>
</evidence>
<evidence type="ECO:0000250" key="5">
    <source>
        <dbReference type="UniProtKB" id="Q3V5W6"/>
    </source>
</evidence>
<evidence type="ECO:0000255" key="6">
    <source>
        <dbReference type="PROSITE-ProRule" id="PRU01330"/>
    </source>
</evidence>
<evidence type="ECO:0000255" key="7">
    <source>
        <dbReference type="PROSITE-ProRule" id="PRU01331"/>
    </source>
</evidence>
<evidence type="ECO:0000269" key="8">
    <source ref="3"/>
</evidence>
<evidence type="ECO:0000305" key="9"/>
<proteinExistence type="evidence at protein level"/>
<keyword id="KW-0067">ATP-binding</keyword>
<keyword id="KW-0963">Cytoplasm</keyword>
<keyword id="KW-0903">Direct protein sequencing</keyword>
<keyword id="KW-0364">Heterocyst</keyword>
<keyword id="KW-0436">Ligase</keyword>
<keyword id="KW-0460">Magnesium</keyword>
<keyword id="KW-0479">Metal-binding</keyword>
<keyword id="KW-0535">Nitrogen fixation</keyword>
<keyword id="KW-0547">Nucleotide-binding</keyword>
<keyword id="KW-0597">Phosphoprotein</keyword>
<keyword id="KW-1185">Reference proteome</keyword>
<dbReference type="EC" id="6.3.1.2" evidence="3"/>
<dbReference type="EMBL" id="X00147">
    <property type="protein sequence ID" value="CAA24982.1"/>
    <property type="molecule type" value="Genomic_DNA"/>
</dbReference>
<dbReference type="EMBL" id="BA000019">
    <property type="protein sequence ID" value="BAB74027.1"/>
    <property type="molecule type" value="Genomic_DNA"/>
</dbReference>
<dbReference type="PIR" id="A01192">
    <property type="entry name" value="AJAIQ"/>
</dbReference>
<dbReference type="PIR" id="AI2096">
    <property type="entry name" value="AI2096"/>
</dbReference>
<dbReference type="RefSeq" id="WP_010996484.1">
    <property type="nucleotide sequence ID" value="NZ_RSCN01000004.1"/>
</dbReference>
<dbReference type="SMR" id="P00964"/>
<dbReference type="STRING" id="103690.gene:10494357"/>
<dbReference type="KEGG" id="ana:alr2328"/>
<dbReference type="eggNOG" id="COG0174">
    <property type="taxonomic scope" value="Bacteria"/>
</dbReference>
<dbReference type="OrthoDB" id="9807095at2"/>
<dbReference type="Proteomes" id="UP000002483">
    <property type="component" value="Chromosome"/>
</dbReference>
<dbReference type="GO" id="GO:0005737">
    <property type="term" value="C:cytoplasm"/>
    <property type="evidence" value="ECO:0007669"/>
    <property type="project" value="UniProtKB-SubCell"/>
</dbReference>
<dbReference type="GO" id="GO:0016020">
    <property type="term" value="C:membrane"/>
    <property type="evidence" value="ECO:0007669"/>
    <property type="project" value="TreeGrafter"/>
</dbReference>
<dbReference type="GO" id="GO:0005524">
    <property type="term" value="F:ATP binding"/>
    <property type="evidence" value="ECO:0007669"/>
    <property type="project" value="UniProtKB-KW"/>
</dbReference>
<dbReference type="GO" id="GO:0004356">
    <property type="term" value="F:glutamine synthetase activity"/>
    <property type="evidence" value="ECO:0007669"/>
    <property type="project" value="UniProtKB-EC"/>
</dbReference>
<dbReference type="GO" id="GO:0046872">
    <property type="term" value="F:metal ion binding"/>
    <property type="evidence" value="ECO:0007669"/>
    <property type="project" value="UniProtKB-KW"/>
</dbReference>
<dbReference type="GO" id="GO:0006542">
    <property type="term" value="P:glutamine biosynthetic process"/>
    <property type="evidence" value="ECO:0007669"/>
    <property type="project" value="InterPro"/>
</dbReference>
<dbReference type="GO" id="GO:0043158">
    <property type="term" value="P:heterocyst development"/>
    <property type="evidence" value="ECO:0007669"/>
    <property type="project" value="UniProtKB-KW"/>
</dbReference>
<dbReference type="GO" id="GO:0009399">
    <property type="term" value="P:nitrogen fixation"/>
    <property type="evidence" value="ECO:0007669"/>
    <property type="project" value="UniProtKB-KW"/>
</dbReference>
<dbReference type="GO" id="GO:0019740">
    <property type="term" value="P:nitrogen utilization"/>
    <property type="evidence" value="ECO:0007669"/>
    <property type="project" value="TreeGrafter"/>
</dbReference>
<dbReference type="FunFam" id="3.30.590.10:FF:000001">
    <property type="entry name" value="Glutamine synthetase"/>
    <property type="match status" value="1"/>
</dbReference>
<dbReference type="Gene3D" id="3.10.20.70">
    <property type="entry name" value="Glutamine synthetase, N-terminal domain"/>
    <property type="match status" value="1"/>
</dbReference>
<dbReference type="Gene3D" id="3.30.590.10">
    <property type="entry name" value="Glutamine synthetase/guanido kinase, catalytic domain"/>
    <property type="match status" value="1"/>
</dbReference>
<dbReference type="InterPro" id="IPR008147">
    <property type="entry name" value="Gln_synt_N"/>
</dbReference>
<dbReference type="InterPro" id="IPR036651">
    <property type="entry name" value="Gln_synt_N_sf"/>
</dbReference>
<dbReference type="InterPro" id="IPR014746">
    <property type="entry name" value="Gln_synth/guanido_kin_cat_dom"/>
</dbReference>
<dbReference type="InterPro" id="IPR008146">
    <property type="entry name" value="Gln_synth_cat_dom"/>
</dbReference>
<dbReference type="InterPro" id="IPR027303">
    <property type="entry name" value="Gln_synth_gly_rich_site"/>
</dbReference>
<dbReference type="InterPro" id="IPR004809">
    <property type="entry name" value="Gln_synth_I"/>
</dbReference>
<dbReference type="InterPro" id="IPR001637">
    <property type="entry name" value="Gln_synth_I_adenylation_site"/>
</dbReference>
<dbReference type="InterPro" id="IPR027302">
    <property type="entry name" value="Gln_synth_N_conserv_site"/>
</dbReference>
<dbReference type="NCBIfam" id="TIGR00653">
    <property type="entry name" value="GlnA"/>
    <property type="match status" value="1"/>
</dbReference>
<dbReference type="PANTHER" id="PTHR43407">
    <property type="entry name" value="GLUTAMINE SYNTHETASE"/>
    <property type="match status" value="1"/>
</dbReference>
<dbReference type="PANTHER" id="PTHR43407:SF1">
    <property type="entry name" value="LENGSIN"/>
    <property type="match status" value="1"/>
</dbReference>
<dbReference type="Pfam" id="PF00120">
    <property type="entry name" value="Gln-synt_C"/>
    <property type="match status" value="1"/>
</dbReference>
<dbReference type="Pfam" id="PF03951">
    <property type="entry name" value="Gln-synt_N"/>
    <property type="match status" value="1"/>
</dbReference>
<dbReference type="SMART" id="SM01230">
    <property type="entry name" value="Gln-synt_C"/>
    <property type="match status" value="1"/>
</dbReference>
<dbReference type="SUPFAM" id="SSF54368">
    <property type="entry name" value="Glutamine synthetase, N-terminal domain"/>
    <property type="match status" value="1"/>
</dbReference>
<dbReference type="SUPFAM" id="SSF55931">
    <property type="entry name" value="Glutamine synthetase/guanido kinase"/>
    <property type="match status" value="1"/>
</dbReference>
<dbReference type="PROSITE" id="PS00180">
    <property type="entry name" value="GLNA_1"/>
    <property type="match status" value="1"/>
</dbReference>
<dbReference type="PROSITE" id="PS00182">
    <property type="entry name" value="GLNA_ADENYLATION"/>
    <property type="match status" value="1"/>
</dbReference>
<dbReference type="PROSITE" id="PS00181">
    <property type="entry name" value="GLNA_ATP"/>
    <property type="match status" value="1"/>
</dbReference>
<dbReference type="PROSITE" id="PS51986">
    <property type="entry name" value="GS_BETA_GRASP"/>
    <property type="match status" value="1"/>
</dbReference>
<dbReference type="PROSITE" id="PS51987">
    <property type="entry name" value="GS_CATALYTIC"/>
    <property type="match status" value="1"/>
</dbReference>
<accession>P00964</accession>
<protein>
    <recommendedName>
        <fullName evidence="3">Glutamine synthetase</fullName>
        <shortName evidence="3">GS</shortName>
        <ecNumber evidence="3">6.3.1.2</ecNumber>
    </recommendedName>
    <alternativeName>
        <fullName evidence="3">Glutamate--ammonia ligase</fullName>
    </alternativeName>
    <alternativeName>
        <fullName evidence="3">Glutamine synthetase I beta</fullName>
        <shortName evidence="3">GSI beta</shortName>
    </alternativeName>
</protein>
<comment type="function">
    <text evidence="3">Involved in nitrogen metabolism via ammonium assimilation. Catalyzes the ATP-dependent biosynthesis of glutamine from glutamate and ammonia.</text>
</comment>
<comment type="catalytic activity">
    <reaction evidence="3">
        <text>L-glutamate + NH4(+) + ATP = L-glutamine + ADP + phosphate + H(+)</text>
        <dbReference type="Rhea" id="RHEA:16169"/>
        <dbReference type="ChEBI" id="CHEBI:15378"/>
        <dbReference type="ChEBI" id="CHEBI:28938"/>
        <dbReference type="ChEBI" id="CHEBI:29985"/>
        <dbReference type="ChEBI" id="CHEBI:30616"/>
        <dbReference type="ChEBI" id="CHEBI:43474"/>
        <dbReference type="ChEBI" id="CHEBI:58359"/>
        <dbReference type="ChEBI" id="CHEBI:456216"/>
        <dbReference type="EC" id="6.3.1.2"/>
    </reaction>
</comment>
<comment type="cofactor">
    <cofactor evidence="3">
        <name>Mg(2+)</name>
        <dbReference type="ChEBI" id="CHEBI:18420"/>
    </cofactor>
    <text evidence="3">Binds 2 Mg(2+) ions per subunit.</text>
</comment>
<comment type="activity regulation">
    <text evidence="5">The activity of this enzyme could be controlled by adenylation under conditions of abundant glutamine.</text>
</comment>
<comment type="subunit">
    <text evidence="3">Oligomer of 12 subunits arranged in the form of two hexagons.</text>
</comment>
<comment type="subcellular location">
    <subcellularLocation>
        <location evidence="4">Cytoplasm</location>
    </subcellularLocation>
</comment>
<comment type="mass spectrometry"/>
<comment type="miscellaneous">
    <text>In Anabaena, it is present in ammonia-grown vegetative cells as well as in heterocysts (for nitrogen fixation).</text>
</comment>
<comment type="similarity">
    <text evidence="3">Belongs to the glutamine synthetase family.</text>
</comment>
<sequence>MTTPQEVLKRIQDEKIELIDLKFIDTVGTWQHLTLYQNQIDESSFSDGVPFDGSSIRGWKAINESDMTMVLDPNTAWIDPFMEVPTLSIVCSIKEPRTGEWYNRCPRVIAQKAIDYLVSTGIGDTAFFGPEAEFFIFDSARFAQNANEGYYFLDSVEGAWNSGKEGTADKPNLAYKPRFKEGYFPVSPTDSFQDIRTEMLLTMAKLGVPIEKHHHEVATGGQCELGFRFGKLIEAADWLMIYKYVIKNVAKKYGKTVTFMPKPIFGDNGSGMHCHQSIWKDGKPLFAGDQYAGLSEMGLYYIGGLLKHAPALLAITNPSTNSYKRLVPGYEAPVNLAYSQGNRSASIRIPLSGTNPKAKRLEFRCPDATSNPYLAFAAMLCAGIDGIKNKIHPGEPLDKNIYELSPEELAKVPSTPGSLELALEALENDHAFLTDTGVFTEDFIQNWIDYKLANEVKQMQLRPHPYEFSIYYDV</sequence>
<feature type="initiator methionine" description="Removed" evidence="9">
    <location>
        <position position="1"/>
    </location>
</feature>
<feature type="chain" id="PRO_0000153215" description="Glutamine synthetase">
    <location>
        <begin position="2"/>
        <end position="474"/>
    </location>
</feature>
<feature type="domain" description="GS beta-grasp" evidence="6">
    <location>
        <begin position="14"/>
        <end position="99"/>
    </location>
</feature>
<feature type="domain" description="GS catalytic" evidence="7">
    <location>
        <begin position="106"/>
        <end position="474"/>
    </location>
</feature>
<feature type="binding site" evidence="3">
    <location>
        <position position="131"/>
    </location>
    <ligand>
        <name>Mg(2+)</name>
        <dbReference type="ChEBI" id="CHEBI:18420"/>
        <label>1</label>
    </ligand>
</feature>
<feature type="binding site" evidence="3">
    <location>
        <position position="133"/>
    </location>
    <ligand>
        <name>Mg(2+)</name>
        <dbReference type="ChEBI" id="CHEBI:18420"/>
        <label>2</label>
    </ligand>
</feature>
<feature type="binding site" evidence="3">
    <location>
        <position position="211"/>
    </location>
    <ligand>
        <name>ATP</name>
        <dbReference type="ChEBI" id="CHEBI:30616"/>
    </ligand>
</feature>
<feature type="binding site" evidence="3">
    <location>
        <position position="216"/>
    </location>
    <ligand>
        <name>Mg(2+)</name>
        <dbReference type="ChEBI" id="CHEBI:18420"/>
        <label>2</label>
    </ligand>
</feature>
<feature type="binding site" evidence="3">
    <location>
        <position position="224"/>
    </location>
    <ligand>
        <name>Mg(2+)</name>
        <dbReference type="ChEBI" id="CHEBI:18420"/>
        <label>2</label>
    </ligand>
</feature>
<feature type="binding site" evidence="4">
    <location>
        <begin position="268"/>
        <end position="269"/>
    </location>
    <ligand>
        <name>L-glutamate</name>
        <dbReference type="ChEBI" id="CHEBI:29985"/>
    </ligand>
</feature>
<feature type="binding site" evidence="2">
    <location>
        <position position="269"/>
    </location>
    <ligand>
        <name>L-glutamate</name>
        <dbReference type="ChEBI" id="CHEBI:29985"/>
    </ligand>
</feature>
<feature type="binding site" evidence="4">
    <location>
        <position position="273"/>
    </location>
    <ligand>
        <name>Mg(2+)</name>
        <dbReference type="ChEBI" id="CHEBI:18420"/>
        <label>1</label>
    </ligand>
</feature>
<feature type="binding site" evidence="4">
    <location>
        <begin position="275"/>
        <end position="277"/>
    </location>
    <ligand>
        <name>ATP</name>
        <dbReference type="ChEBI" id="CHEBI:30616"/>
    </ligand>
</feature>
<feature type="binding site" evidence="3">
    <location>
        <position position="277"/>
    </location>
    <ligand>
        <name>ATP</name>
        <dbReference type="ChEBI" id="CHEBI:30616"/>
    </ligand>
</feature>
<feature type="binding site" evidence="1">
    <location>
        <position position="325"/>
    </location>
    <ligand>
        <name>L-glutamate</name>
        <dbReference type="ChEBI" id="CHEBI:29985"/>
    </ligand>
</feature>
<feature type="binding site" evidence="1">
    <location>
        <position position="331"/>
    </location>
    <ligand>
        <name>L-glutamate</name>
        <dbReference type="ChEBI" id="CHEBI:29985"/>
    </ligand>
</feature>
<feature type="binding site" evidence="3">
    <location>
        <position position="343"/>
    </location>
    <ligand>
        <name>ATP</name>
        <dbReference type="ChEBI" id="CHEBI:30616"/>
    </ligand>
</feature>
<feature type="binding site" evidence="4">
    <location>
        <position position="343"/>
    </location>
    <ligand>
        <name>L-glutamate</name>
        <dbReference type="ChEBI" id="CHEBI:29985"/>
    </ligand>
</feature>
<feature type="binding site" evidence="3">
    <location>
        <position position="348"/>
    </location>
    <ligand>
        <name>ATP</name>
        <dbReference type="ChEBI" id="CHEBI:30616"/>
    </ligand>
</feature>
<feature type="binding site" evidence="3">
    <location>
        <position position="357"/>
    </location>
    <ligand>
        <name>ATP</name>
        <dbReference type="ChEBI" id="CHEBI:30616"/>
    </ligand>
</feature>
<feature type="binding site" evidence="3">
    <location>
        <position position="362"/>
    </location>
    <ligand>
        <name>Mg(2+)</name>
        <dbReference type="ChEBI" id="CHEBI:18420"/>
        <label>1</label>
    </ligand>
</feature>
<feature type="binding site" evidence="1">
    <location>
        <position position="364"/>
    </location>
    <ligand>
        <name>L-glutamate</name>
        <dbReference type="ChEBI" id="CHEBI:29985"/>
    </ligand>
</feature>
<feature type="modified residue" description="O-AMP-tyrosine" evidence="4">
    <location>
        <position position="402"/>
    </location>
</feature>
<feature type="sequence conflict" description="In Ref. 1; CAA24982." evidence="9" ref="1">
    <original>R</original>
    <variation>P</variation>
    <location>
        <position position="107"/>
    </location>
</feature>
<feature type="sequence conflict" description="In Ref. 3; AA sequence." evidence="9" ref="3">
    <location>
        <position position="177"/>
    </location>
</feature>
<reference key="1">
    <citation type="journal article" date="1983" name="Nature">
        <title>Different promoters for the Anabaena glutamine synthetase gene during growth usine molecular or fixed nitrogen.</title>
        <authorList>
            <person name="Tumer N.E."/>
            <person name="Robinson S.J."/>
            <person name="Haselkorn R."/>
        </authorList>
    </citation>
    <scope>NUCLEOTIDE SEQUENCE [GENOMIC DNA]</scope>
</reference>
<reference key="2">
    <citation type="journal article" date="2001" name="DNA Res.">
        <title>Complete genomic sequence of the filamentous nitrogen-fixing cyanobacterium Anabaena sp. strain PCC 7120.</title>
        <authorList>
            <person name="Kaneko T."/>
            <person name="Nakamura Y."/>
            <person name="Wolk C.P."/>
            <person name="Kuritz T."/>
            <person name="Sasamoto S."/>
            <person name="Watanabe A."/>
            <person name="Iriguchi M."/>
            <person name="Ishikawa A."/>
            <person name="Kawashima K."/>
            <person name="Kimura T."/>
            <person name="Kishida Y."/>
            <person name="Kohara M."/>
            <person name="Matsumoto M."/>
            <person name="Matsuno A."/>
            <person name="Muraki A."/>
            <person name="Nakazaki N."/>
            <person name="Shimpo S."/>
            <person name="Sugimoto M."/>
            <person name="Takazawa M."/>
            <person name="Yamada M."/>
            <person name="Yasuda M."/>
            <person name="Tabata S."/>
        </authorList>
    </citation>
    <scope>NUCLEOTIDE SEQUENCE [LARGE SCALE GENOMIC DNA]</scope>
    <source>
        <strain>PCC 7120 / SAG 25.82 / UTEX 2576</strain>
    </source>
</reference>
<reference key="3">
    <citation type="submission" date="2008-12" db="UniProtKB">
        <authorList>
            <person name="Singh H."/>
            <person name="Rajaram H."/>
            <person name="Apte S.K."/>
        </authorList>
    </citation>
    <scope>PROTEIN SEQUENCE OF 23-57; 98-104; 142-196; 213-243; 326-343 AND 391-411</scope>
    <scope>MASS SPECTROMETRY</scope>
</reference>
<name>GLN1B_NOSS1</name>